<name>RNH1_MOUSE</name>
<proteinExistence type="evidence at transcript level"/>
<keyword id="KW-0963">Cytoplasm</keyword>
<keyword id="KW-0255">Endonuclease</keyword>
<keyword id="KW-0378">Hydrolase</keyword>
<keyword id="KW-0460">Magnesium</keyword>
<keyword id="KW-0479">Metal-binding</keyword>
<keyword id="KW-0540">Nuclease</keyword>
<keyword id="KW-1185">Reference proteome</keyword>
<sequence length="285" mass="31805">MRWLLPLSRTVTLAVVRLRRGICGLGMFYAVRRGRRTGVFLSWSECKAQVDRFPAARFKKFATEDEAWAFVRSSSSPDGSKGQESAHEQKSQAKTSKRPREPLGEGEELPEPGPKHTRQDTEPAAVVSKDTFSYMGESVIVYTDGCCSSNGRKRARAGIGVYWGPGHPLNVGIRLPGRQTNQRAEIHAACKAIMQAKAQNISKLVLYTDSMFTINGITNWVQGWKKNGWRTSTGKDVINKEDFMELDELTQGMDIQWMHIPGHSGFVGNEEADRLAREGAKQSED</sequence>
<accession>O70338</accession>
<accession>Q8VCR6</accession>
<protein>
    <recommendedName>
        <fullName>Ribonuclease H1</fullName>
        <shortName>RNase H1</shortName>
        <ecNumber>3.1.26.4</ecNumber>
    </recommendedName>
</protein>
<reference key="1">
    <citation type="journal article" date="1998" name="Genomics">
        <title>Cloning, expression, and mapping of ribonucleases H of human and mouse related to bacterial RNase HI.</title>
        <authorList>
            <person name="Cerritelli S.M."/>
            <person name="Crouch R.J."/>
        </authorList>
    </citation>
    <scope>NUCLEOTIDE SEQUENCE [MRNA]</scope>
    <source>
        <tissue>Carcinoma</tissue>
    </source>
</reference>
<reference key="2">
    <citation type="journal article" date="2004" name="Genome Res.">
        <title>The status, quality, and expansion of the NIH full-length cDNA project: the Mammalian Gene Collection (MGC).</title>
        <authorList>
            <consortium name="The MGC Project Team"/>
        </authorList>
    </citation>
    <scope>NUCLEOTIDE SEQUENCE [LARGE SCALE MRNA]</scope>
    <source>
        <strain>FVB/N</strain>
        <tissue>Liver</tissue>
    </source>
</reference>
<dbReference type="EC" id="3.1.26.4"/>
<dbReference type="EMBL" id="AF048993">
    <property type="protein sequence ID" value="AAC78562.1"/>
    <property type="molecule type" value="mRNA"/>
</dbReference>
<dbReference type="EMBL" id="BC019411">
    <property type="protein sequence ID" value="AAH19411.1"/>
    <property type="molecule type" value="mRNA"/>
</dbReference>
<dbReference type="CCDS" id="CCDS25852.1"/>
<dbReference type="SMR" id="O70338"/>
<dbReference type="FunCoup" id="O70338">
    <property type="interactions" value="3037"/>
</dbReference>
<dbReference type="STRING" id="10090.ENSMUSP00000020959"/>
<dbReference type="iPTMnet" id="O70338"/>
<dbReference type="PhosphoSitePlus" id="O70338"/>
<dbReference type="jPOST" id="O70338"/>
<dbReference type="PaxDb" id="10090-ENSMUSP00000020959"/>
<dbReference type="PeptideAtlas" id="O70338"/>
<dbReference type="ProteomicsDB" id="300429"/>
<dbReference type="Pumba" id="O70338"/>
<dbReference type="AGR" id="MGI:1335073"/>
<dbReference type="MGI" id="MGI:1335073">
    <property type="gene designation" value="Rnaseh1"/>
</dbReference>
<dbReference type="eggNOG" id="KOG3752">
    <property type="taxonomic scope" value="Eukaryota"/>
</dbReference>
<dbReference type="InParanoid" id="O70338"/>
<dbReference type="OrthoDB" id="407198at2759"/>
<dbReference type="PhylomeDB" id="O70338"/>
<dbReference type="ChiTaRS" id="Rnaseh1">
    <property type="organism name" value="mouse"/>
</dbReference>
<dbReference type="PRO" id="PR:O70338"/>
<dbReference type="Proteomes" id="UP000000589">
    <property type="component" value="Unplaced"/>
</dbReference>
<dbReference type="RNAct" id="O70338">
    <property type="molecule type" value="protein"/>
</dbReference>
<dbReference type="GO" id="GO:0005739">
    <property type="term" value="C:mitochondrion"/>
    <property type="evidence" value="ECO:0000314"/>
    <property type="project" value="MGI"/>
</dbReference>
<dbReference type="GO" id="GO:0005634">
    <property type="term" value="C:nucleus"/>
    <property type="evidence" value="ECO:0000314"/>
    <property type="project" value="MGI"/>
</dbReference>
<dbReference type="GO" id="GO:0042802">
    <property type="term" value="F:identical protein binding"/>
    <property type="evidence" value="ECO:0000353"/>
    <property type="project" value="MGI"/>
</dbReference>
<dbReference type="GO" id="GO:0000287">
    <property type="term" value="F:magnesium ion binding"/>
    <property type="evidence" value="ECO:0007669"/>
    <property type="project" value="InterPro"/>
</dbReference>
<dbReference type="GO" id="GO:0003676">
    <property type="term" value="F:nucleic acid binding"/>
    <property type="evidence" value="ECO:0007669"/>
    <property type="project" value="InterPro"/>
</dbReference>
<dbReference type="GO" id="GO:0004523">
    <property type="term" value="F:RNA-DNA hybrid ribonuclease activity"/>
    <property type="evidence" value="ECO:0000314"/>
    <property type="project" value="MGI"/>
</dbReference>
<dbReference type="GO" id="GO:0006264">
    <property type="term" value="P:mitochondrial DNA replication"/>
    <property type="evidence" value="ECO:0000315"/>
    <property type="project" value="MGI"/>
</dbReference>
<dbReference type="CDD" id="cd09280">
    <property type="entry name" value="RNase_HI_eukaryote_like"/>
    <property type="match status" value="1"/>
</dbReference>
<dbReference type="FunFam" id="3.30.420.10:FF:000049">
    <property type="entry name" value="Ribonuclease H1"/>
    <property type="match status" value="1"/>
</dbReference>
<dbReference type="FunFam" id="3.40.970.10:FF:000001">
    <property type="entry name" value="Ribonuclease H1"/>
    <property type="match status" value="1"/>
</dbReference>
<dbReference type="Gene3D" id="3.30.420.10">
    <property type="entry name" value="Ribonuclease H-like superfamily/Ribonuclease H"/>
    <property type="match status" value="1"/>
</dbReference>
<dbReference type="Gene3D" id="3.40.970.10">
    <property type="entry name" value="Ribonuclease H1, N-terminal domain"/>
    <property type="match status" value="1"/>
</dbReference>
<dbReference type="InterPro" id="IPR009027">
    <property type="entry name" value="Ribosomal_bL9/RNase_H1_N"/>
</dbReference>
<dbReference type="InterPro" id="IPR050092">
    <property type="entry name" value="RNase_H"/>
</dbReference>
<dbReference type="InterPro" id="IPR017067">
    <property type="entry name" value="RNase_H1_euk"/>
</dbReference>
<dbReference type="InterPro" id="IPR011320">
    <property type="entry name" value="RNase_H1_N"/>
</dbReference>
<dbReference type="InterPro" id="IPR037056">
    <property type="entry name" value="RNase_H1_N_sf"/>
</dbReference>
<dbReference type="InterPro" id="IPR012337">
    <property type="entry name" value="RNaseH-like_sf"/>
</dbReference>
<dbReference type="InterPro" id="IPR002156">
    <property type="entry name" value="RNaseH_domain"/>
</dbReference>
<dbReference type="InterPro" id="IPR036397">
    <property type="entry name" value="RNaseH_sf"/>
</dbReference>
<dbReference type="PANTHER" id="PTHR10642">
    <property type="entry name" value="RIBONUCLEASE H1"/>
    <property type="match status" value="1"/>
</dbReference>
<dbReference type="PANTHER" id="PTHR10642:SF26">
    <property type="entry name" value="RIBONUCLEASE H1"/>
    <property type="match status" value="1"/>
</dbReference>
<dbReference type="Pfam" id="PF01693">
    <property type="entry name" value="Cauli_VI"/>
    <property type="match status" value="1"/>
</dbReference>
<dbReference type="Pfam" id="PF00075">
    <property type="entry name" value="RNase_H"/>
    <property type="match status" value="1"/>
</dbReference>
<dbReference type="PIRSF" id="PIRSF036852">
    <property type="entry name" value="Ribonuclease_H1_euk"/>
    <property type="match status" value="1"/>
</dbReference>
<dbReference type="SUPFAM" id="SSF55658">
    <property type="entry name" value="L9 N-domain-like"/>
    <property type="match status" value="1"/>
</dbReference>
<dbReference type="SUPFAM" id="SSF53098">
    <property type="entry name" value="Ribonuclease H-like"/>
    <property type="match status" value="1"/>
</dbReference>
<dbReference type="PROSITE" id="PS50879">
    <property type="entry name" value="RNASE_H_1"/>
    <property type="match status" value="1"/>
</dbReference>
<evidence type="ECO:0000250" key="1"/>
<evidence type="ECO:0000250" key="2">
    <source>
        <dbReference type="UniProtKB" id="O60930"/>
    </source>
</evidence>
<evidence type="ECO:0000255" key="3">
    <source>
        <dbReference type="PROSITE-ProRule" id="PRU00408"/>
    </source>
</evidence>
<evidence type="ECO:0000256" key="4">
    <source>
        <dbReference type="SAM" id="MobiDB-lite"/>
    </source>
</evidence>
<evidence type="ECO:0000305" key="5"/>
<gene>
    <name type="primary">Rnaseh1</name>
    <name type="synonym">Rnh1</name>
</gene>
<feature type="chain" id="PRO_0000195434" description="Ribonuclease H1">
    <location>
        <begin position="1"/>
        <end position="285"/>
    </location>
</feature>
<feature type="domain" description="RNase H type-1" evidence="3">
    <location>
        <begin position="135"/>
        <end position="281"/>
    </location>
</feature>
<feature type="region of interest" description="Disordered" evidence="4">
    <location>
        <begin position="72"/>
        <end position="126"/>
    </location>
</feature>
<feature type="binding site" evidence="3">
    <location>
        <position position="144"/>
    </location>
    <ligand>
        <name>Mg(2+)</name>
        <dbReference type="ChEBI" id="CHEBI:18420"/>
        <label>1</label>
    </ligand>
</feature>
<feature type="binding site" evidence="3">
    <location>
        <position position="144"/>
    </location>
    <ligand>
        <name>Mg(2+)</name>
        <dbReference type="ChEBI" id="CHEBI:18420"/>
        <label>2</label>
    </ligand>
</feature>
<feature type="binding site" evidence="3">
    <location>
        <position position="185"/>
    </location>
    <ligand>
        <name>Mg(2+)</name>
        <dbReference type="ChEBI" id="CHEBI:18420"/>
        <label>1</label>
    </ligand>
</feature>
<feature type="binding site" evidence="3">
    <location>
        <position position="209"/>
    </location>
    <ligand>
        <name>Mg(2+)</name>
        <dbReference type="ChEBI" id="CHEBI:18420"/>
        <label>1</label>
    </ligand>
</feature>
<feature type="binding site" evidence="3">
    <location>
        <position position="273"/>
    </location>
    <ligand>
        <name>Mg(2+)</name>
        <dbReference type="ChEBI" id="CHEBI:18420"/>
        <label>2</label>
    </ligand>
</feature>
<feature type="sequence conflict" description="In Ref. 2; AAH19411." evidence="5" ref="2">
    <original>A</original>
    <variation>V</variation>
    <location>
        <position position="93"/>
    </location>
</feature>
<comment type="function">
    <text evidence="2">Endonuclease that specifically degrades the RNA of RNA-DNA hybrids. Plays a role in RNA polymerase II (RNAp II) transcription termination by degrading R-loop RNA-DNA hybrid formation at G-rich pause sites located downstream of the poly(A) site and behind the elongating RNAp II.</text>
</comment>
<comment type="catalytic activity">
    <reaction evidence="3">
        <text>Endonucleolytic cleavage to 5'-phosphomonoester.</text>
        <dbReference type="EC" id="3.1.26.4"/>
    </reaction>
</comment>
<comment type="cofactor">
    <cofactor evidence="1">
        <name>Mg(2+)</name>
        <dbReference type="ChEBI" id="CHEBI:18420"/>
    </cofactor>
    <text evidence="1">Binds 1 Mg(2+) ion per subunit. May bind a second metal ion at a regulatory site, or after substrate binding.</text>
</comment>
<comment type="activity regulation">
    <text evidence="1">In the presence of magnesium, manganese is inhibitory.</text>
</comment>
<comment type="subunit">
    <text evidence="1">Monomer.</text>
</comment>
<comment type="subcellular location">
    <subcellularLocation>
        <location evidence="5">Cytoplasm</location>
    </subcellularLocation>
</comment>
<comment type="similarity">
    <text evidence="5">Belongs to the RNase H family.</text>
</comment>
<organism>
    <name type="scientific">Mus musculus</name>
    <name type="common">Mouse</name>
    <dbReference type="NCBI Taxonomy" id="10090"/>
    <lineage>
        <taxon>Eukaryota</taxon>
        <taxon>Metazoa</taxon>
        <taxon>Chordata</taxon>
        <taxon>Craniata</taxon>
        <taxon>Vertebrata</taxon>
        <taxon>Euteleostomi</taxon>
        <taxon>Mammalia</taxon>
        <taxon>Eutheria</taxon>
        <taxon>Euarchontoglires</taxon>
        <taxon>Glires</taxon>
        <taxon>Rodentia</taxon>
        <taxon>Myomorpha</taxon>
        <taxon>Muroidea</taxon>
        <taxon>Muridae</taxon>
        <taxon>Murinae</taxon>
        <taxon>Mus</taxon>
        <taxon>Mus</taxon>
    </lineage>
</organism>